<comment type="function">
    <text evidence="1">Catalyzes two activities which are involved in the cyclic version of arginine biosynthesis: the synthesis of acetylglutamate from glutamate and acetyl-CoA, and of ornithine by transacetylation between acetylornithine and glutamate.</text>
</comment>
<comment type="catalytic activity">
    <reaction evidence="1">
        <text>N(2)-acetyl-L-ornithine + L-glutamate = N-acetyl-L-glutamate + L-ornithine</text>
        <dbReference type="Rhea" id="RHEA:15349"/>
        <dbReference type="ChEBI" id="CHEBI:29985"/>
        <dbReference type="ChEBI" id="CHEBI:44337"/>
        <dbReference type="ChEBI" id="CHEBI:46911"/>
        <dbReference type="ChEBI" id="CHEBI:57805"/>
        <dbReference type="EC" id="2.3.1.35"/>
    </reaction>
</comment>
<comment type="catalytic activity">
    <reaction evidence="1">
        <text>L-glutamate + acetyl-CoA = N-acetyl-L-glutamate + CoA + H(+)</text>
        <dbReference type="Rhea" id="RHEA:24292"/>
        <dbReference type="ChEBI" id="CHEBI:15378"/>
        <dbReference type="ChEBI" id="CHEBI:29985"/>
        <dbReference type="ChEBI" id="CHEBI:44337"/>
        <dbReference type="ChEBI" id="CHEBI:57287"/>
        <dbReference type="ChEBI" id="CHEBI:57288"/>
        <dbReference type="EC" id="2.3.1.1"/>
    </reaction>
</comment>
<comment type="pathway">
    <text evidence="1">Amino-acid biosynthesis; L-arginine biosynthesis; L-ornithine and N-acetyl-L-glutamate from L-glutamate and N(2)-acetyl-L-ornithine (cyclic): step 1/1.</text>
</comment>
<comment type="pathway">
    <text evidence="1">Amino-acid biosynthesis; L-arginine biosynthesis; N(2)-acetyl-L-ornithine from L-glutamate: step 1/4.</text>
</comment>
<comment type="subunit">
    <text evidence="1">Heterodimer of an alpha and a beta chain.</text>
</comment>
<comment type="subcellular location">
    <subcellularLocation>
        <location evidence="1">Mitochondrion matrix</location>
    </subcellularLocation>
</comment>
<comment type="PTM">
    <text evidence="1">The alpha and beta chains are autoproteolytically processed from a single precursor protein within the mitochondrion.</text>
</comment>
<comment type="miscellaneous">
    <text evidence="1">This protein may be expected to contain an N-terminal transit peptide but none has been predicted.</text>
</comment>
<comment type="similarity">
    <text evidence="1">Belongs to the ArgJ family.</text>
</comment>
<organism>
    <name type="scientific">Paracoccidioides brasiliensis (strain Pb18)</name>
    <dbReference type="NCBI Taxonomy" id="502780"/>
    <lineage>
        <taxon>Eukaryota</taxon>
        <taxon>Fungi</taxon>
        <taxon>Dikarya</taxon>
        <taxon>Ascomycota</taxon>
        <taxon>Pezizomycotina</taxon>
        <taxon>Eurotiomycetes</taxon>
        <taxon>Eurotiomycetidae</taxon>
        <taxon>Onygenales</taxon>
        <taxon>Ajellomycetaceae</taxon>
        <taxon>Paracoccidioides</taxon>
    </lineage>
</organism>
<dbReference type="EC" id="2.3.1.35" evidence="1"/>
<dbReference type="EC" id="2.3.1.1" evidence="1"/>
<dbReference type="EMBL" id="KN275963">
    <property type="protein sequence ID" value="EEH49748.1"/>
    <property type="molecule type" value="Genomic_DNA"/>
</dbReference>
<dbReference type="RefSeq" id="XP_010761426.1">
    <property type="nucleotide sequence ID" value="XM_010763124.1"/>
</dbReference>
<dbReference type="SMR" id="C1GEZ1"/>
<dbReference type="FunCoup" id="C1GEZ1">
    <property type="interactions" value="274"/>
</dbReference>
<dbReference type="STRING" id="502780.C1GEZ1"/>
<dbReference type="GeneID" id="22584682"/>
<dbReference type="KEGG" id="pbn:PADG_05827"/>
<dbReference type="VEuPathDB" id="FungiDB:PADG_05827"/>
<dbReference type="eggNOG" id="KOG2786">
    <property type="taxonomic scope" value="Eukaryota"/>
</dbReference>
<dbReference type="HOGENOM" id="CLU_027172_1_0_1"/>
<dbReference type="InParanoid" id="C1GEZ1"/>
<dbReference type="OMA" id="WGRIVMA"/>
<dbReference type="OrthoDB" id="30457at33183"/>
<dbReference type="UniPathway" id="UPA00068">
    <property type="reaction ID" value="UER00106"/>
</dbReference>
<dbReference type="UniPathway" id="UPA00068">
    <property type="reaction ID" value="UER00111"/>
</dbReference>
<dbReference type="Proteomes" id="UP000001628">
    <property type="component" value="Unassembled WGS sequence"/>
</dbReference>
<dbReference type="GO" id="GO:0005759">
    <property type="term" value="C:mitochondrial matrix"/>
    <property type="evidence" value="ECO:0007669"/>
    <property type="project" value="UniProtKB-SubCell"/>
</dbReference>
<dbReference type="GO" id="GO:0004358">
    <property type="term" value="F:glutamate N-acetyltransferase activity"/>
    <property type="evidence" value="ECO:0007669"/>
    <property type="project" value="UniProtKB-UniRule"/>
</dbReference>
<dbReference type="GO" id="GO:0004042">
    <property type="term" value="F:L-glutamate N-acetyltransferase activity"/>
    <property type="evidence" value="ECO:0007669"/>
    <property type="project" value="UniProtKB-UniRule"/>
</dbReference>
<dbReference type="GO" id="GO:0006526">
    <property type="term" value="P:L-arginine biosynthetic process"/>
    <property type="evidence" value="ECO:0007669"/>
    <property type="project" value="UniProtKB-UniRule"/>
</dbReference>
<dbReference type="GO" id="GO:0006592">
    <property type="term" value="P:ornithine biosynthetic process"/>
    <property type="evidence" value="ECO:0007669"/>
    <property type="project" value="EnsemblFungi"/>
</dbReference>
<dbReference type="CDD" id="cd02152">
    <property type="entry name" value="OAT"/>
    <property type="match status" value="1"/>
</dbReference>
<dbReference type="FunFam" id="3.60.70.12:FF:000001">
    <property type="entry name" value="Arginine biosynthesis bifunctional protein ArgJ, chloroplastic"/>
    <property type="match status" value="1"/>
</dbReference>
<dbReference type="FunFam" id="3.10.20.340:FF:000002">
    <property type="entry name" value="Arginine biosynthesis bifunctional protein ArgJ, mitochondrial"/>
    <property type="match status" value="1"/>
</dbReference>
<dbReference type="FunFam" id="3.30.2330.10:FF:000001">
    <property type="entry name" value="Arginine biosynthesis bifunctional protein ArgJ, mitochondrial"/>
    <property type="match status" value="1"/>
</dbReference>
<dbReference type="Gene3D" id="3.30.2330.10">
    <property type="entry name" value="arginine biosynthesis bifunctional protein suprefamily"/>
    <property type="match status" value="1"/>
</dbReference>
<dbReference type="Gene3D" id="3.10.20.340">
    <property type="entry name" value="ArgJ beta chain, C-terminal domain"/>
    <property type="match status" value="1"/>
</dbReference>
<dbReference type="Gene3D" id="3.60.70.12">
    <property type="entry name" value="L-amino peptidase D-ALA esterase/amidase"/>
    <property type="match status" value="1"/>
</dbReference>
<dbReference type="HAMAP" id="MF_01106">
    <property type="entry name" value="ArgJ"/>
    <property type="match status" value="1"/>
</dbReference>
<dbReference type="InterPro" id="IPR002813">
    <property type="entry name" value="Arg_biosynth_ArgJ"/>
</dbReference>
<dbReference type="InterPro" id="IPR016117">
    <property type="entry name" value="ArgJ-like_dom_sf"/>
</dbReference>
<dbReference type="InterPro" id="IPR042195">
    <property type="entry name" value="ArgJ_beta_C"/>
</dbReference>
<dbReference type="NCBIfam" id="TIGR00120">
    <property type="entry name" value="ArgJ"/>
    <property type="match status" value="1"/>
</dbReference>
<dbReference type="NCBIfam" id="NF003802">
    <property type="entry name" value="PRK05388.1"/>
    <property type="match status" value="1"/>
</dbReference>
<dbReference type="PANTHER" id="PTHR23100">
    <property type="entry name" value="ARGININE BIOSYNTHESIS BIFUNCTIONAL PROTEIN ARGJ"/>
    <property type="match status" value="1"/>
</dbReference>
<dbReference type="PANTHER" id="PTHR23100:SF0">
    <property type="entry name" value="ARGININE BIOSYNTHESIS BIFUNCTIONAL PROTEIN ARGJ, MITOCHONDRIAL"/>
    <property type="match status" value="1"/>
</dbReference>
<dbReference type="Pfam" id="PF01960">
    <property type="entry name" value="ArgJ"/>
    <property type="match status" value="1"/>
</dbReference>
<dbReference type="SUPFAM" id="SSF56266">
    <property type="entry name" value="DmpA/ArgJ-like"/>
    <property type="match status" value="1"/>
</dbReference>
<proteinExistence type="inferred from homology"/>
<gene>
    <name type="ORF">PADG_05827</name>
</gene>
<reference key="1">
    <citation type="journal article" date="2011" name="PLoS Genet.">
        <title>Comparative genomic analysis of human fungal pathogens causing paracoccidioidomycosis.</title>
        <authorList>
            <person name="Desjardins C.A."/>
            <person name="Champion M.D."/>
            <person name="Holder J.W."/>
            <person name="Muszewska A."/>
            <person name="Goldberg J."/>
            <person name="Bailao A.M."/>
            <person name="Brigido M.M."/>
            <person name="Ferreira M.E."/>
            <person name="Garcia A.M."/>
            <person name="Grynberg M."/>
            <person name="Gujja S."/>
            <person name="Heiman D.I."/>
            <person name="Henn M.R."/>
            <person name="Kodira C.D."/>
            <person name="Leon-Narvaez H."/>
            <person name="Longo L.V.G."/>
            <person name="Ma L.-J."/>
            <person name="Malavazi I."/>
            <person name="Matsuo A.L."/>
            <person name="Morais F.V."/>
            <person name="Pereira M."/>
            <person name="Rodriguez-Brito S."/>
            <person name="Sakthikumar S."/>
            <person name="Salem-Izacc S.M."/>
            <person name="Sykes S.M."/>
            <person name="Teixeira M.M."/>
            <person name="Vallejo M.C."/>
            <person name="Walter M.E."/>
            <person name="Yandava C."/>
            <person name="Young S."/>
            <person name="Zeng Q."/>
            <person name="Zucker J."/>
            <person name="Felipe M.S."/>
            <person name="Goldman G.H."/>
            <person name="Haas B.J."/>
            <person name="McEwen J.G."/>
            <person name="Nino-Vega G."/>
            <person name="Puccia R."/>
            <person name="San-Blas G."/>
            <person name="Soares C.M."/>
            <person name="Birren B.W."/>
            <person name="Cuomo C.A."/>
        </authorList>
    </citation>
    <scope>NUCLEOTIDE SEQUENCE [LARGE SCALE GENOMIC DNA]</scope>
    <source>
        <strain>Pb18</strain>
    </source>
</reference>
<keyword id="KW-0012">Acyltransferase</keyword>
<keyword id="KW-0028">Amino-acid biosynthesis</keyword>
<keyword id="KW-0055">Arginine biosynthesis</keyword>
<keyword id="KW-0068">Autocatalytic cleavage</keyword>
<keyword id="KW-0496">Mitochondrion</keyword>
<keyword id="KW-0511">Multifunctional enzyme</keyword>
<keyword id="KW-1185">Reference proteome</keyword>
<keyword id="KW-0808">Transferase</keyword>
<evidence type="ECO:0000255" key="1">
    <source>
        <dbReference type="HAMAP-Rule" id="MF_03124"/>
    </source>
</evidence>
<name>ARGJ_PARBD</name>
<feature type="chain" id="PRO_0000398078" description="Arginine biosynthesis bifunctional protein ArgJ alpha chain" evidence="1">
    <location>
        <begin position="1"/>
        <end position="240"/>
    </location>
</feature>
<feature type="chain" id="PRO_0000398079" description="Arginine biosynthesis bifunctional protein ArgJ beta chain" evidence="1">
    <location>
        <begin position="241"/>
        <end position="473"/>
    </location>
</feature>
<feature type="active site" description="Nucleophile" evidence="1">
    <location>
        <position position="241"/>
    </location>
</feature>
<feature type="binding site" evidence="1">
    <location>
        <position position="201"/>
    </location>
    <ligand>
        <name>substrate</name>
    </ligand>
</feature>
<feature type="binding site" evidence="1">
    <location>
        <position position="230"/>
    </location>
    <ligand>
        <name>substrate</name>
    </ligand>
</feature>
<feature type="binding site" evidence="1">
    <location>
        <position position="241"/>
    </location>
    <ligand>
        <name>substrate</name>
    </ligand>
</feature>
<feature type="binding site" evidence="1">
    <location>
        <position position="328"/>
    </location>
    <ligand>
        <name>substrate</name>
    </ligand>
</feature>
<feature type="binding site" evidence="1">
    <location>
        <position position="468"/>
    </location>
    <ligand>
        <name>substrate</name>
    </ligand>
</feature>
<feature type="binding site" evidence="1">
    <location>
        <position position="473"/>
    </location>
    <ligand>
        <name>substrate</name>
    </ligand>
</feature>
<feature type="site" description="Involved in the stabilization of negative charge on the oxyanion by the formation of the oxyanion hole" evidence="1">
    <location>
        <position position="162"/>
    </location>
</feature>
<feature type="site" description="Involved in the stabilization of negative charge on the oxyanion by the formation of the oxyanion hole" evidence="1">
    <location>
        <position position="163"/>
    </location>
</feature>
<feature type="site" description="Cleavage; by autolysis" evidence="1">
    <location>
        <begin position="240"/>
        <end position="241"/>
    </location>
</feature>
<accession>C1GEZ1</accession>
<sequence length="473" mass="49861">MKAHQSLHVVAGFVRFPMSKTGQSRCYSILKDISIPASKQKFVPSSGTYPKGFLAAGAHAGVKESNTQFPDVALICSETPCSAAAVFTTNKFQAAPVQVSKQVLEAREGADITGVVINSGCANAVTGKGGLEDAKSMSAKVDECNGTPSTSSKRPSTLVMSTGVIGQRLPIEKILNTIPVAHSSLSSTHKAWLTAARAICTTDTFPKLLSRTFTLPSSPNHTYRIAGMTKGAGMIHPNMATLLGILCTDVPISPAALKLLLSHAVSRSFNCISIDGDTSTNDTVALLANGAAGGQTITTPSSPNYAAMQTVLTSFAQSLAQLVVRDGEGATKFVTVRVLNSPSQADARAIASTIARSPLVKTALYGKDANWGRILCAIGYTQGIQAGTVVPERTSVSFKPVDGSEELKLLVNGEPEIVDEERAARILQDEDLEIVVDLGGGERGEEGMGGEEGIYWFCDFSHEYVTINGDYRT</sequence>
<protein>
    <recommendedName>
        <fullName evidence="1">Arginine biosynthesis bifunctional protein ArgJ, mitochondrial</fullName>
    </recommendedName>
    <domain>
        <recommendedName>
            <fullName evidence="1">Glutamate N-acetyltransferase</fullName>
            <shortName evidence="1">GAT</shortName>
            <ecNumber evidence="1">2.3.1.35</ecNumber>
        </recommendedName>
        <alternativeName>
            <fullName evidence="1">Ornithine acetyltransferase</fullName>
            <shortName evidence="1">OATase</shortName>
        </alternativeName>
        <alternativeName>
            <fullName evidence="1">Ornithine transacetylase</fullName>
        </alternativeName>
    </domain>
    <domain>
        <recommendedName>
            <fullName evidence="1">Amino-acid acetyltransferase</fullName>
            <ecNumber evidence="1">2.3.1.1</ecNumber>
        </recommendedName>
        <alternativeName>
            <fullName evidence="1">N-acetylglutamate synthase</fullName>
            <shortName evidence="1">AGS</shortName>
        </alternativeName>
    </domain>
    <component>
        <recommendedName>
            <fullName evidence="1">Arginine biosynthesis bifunctional protein ArgJ alpha chain</fullName>
        </recommendedName>
    </component>
    <component>
        <recommendedName>
            <fullName evidence="1">Arginine biosynthesis bifunctional protein ArgJ beta chain</fullName>
        </recommendedName>
    </component>
</protein>